<accession>A9HLG2</accession>
<accession>B5ZCG9</accession>
<gene>
    <name evidence="1" type="primary">serS</name>
    <name type="ordered locus">GDI2219</name>
    <name type="ordered locus">Gdia_0437</name>
</gene>
<comment type="function">
    <text evidence="1">Catalyzes the attachment of serine to tRNA(Ser). Is also able to aminoacylate tRNA(Sec) with serine, to form the misacylated tRNA L-seryl-tRNA(Sec), which will be further converted into selenocysteinyl-tRNA(Sec).</text>
</comment>
<comment type="catalytic activity">
    <reaction evidence="1">
        <text>tRNA(Ser) + L-serine + ATP = L-seryl-tRNA(Ser) + AMP + diphosphate + H(+)</text>
        <dbReference type="Rhea" id="RHEA:12292"/>
        <dbReference type="Rhea" id="RHEA-COMP:9669"/>
        <dbReference type="Rhea" id="RHEA-COMP:9703"/>
        <dbReference type="ChEBI" id="CHEBI:15378"/>
        <dbReference type="ChEBI" id="CHEBI:30616"/>
        <dbReference type="ChEBI" id="CHEBI:33019"/>
        <dbReference type="ChEBI" id="CHEBI:33384"/>
        <dbReference type="ChEBI" id="CHEBI:78442"/>
        <dbReference type="ChEBI" id="CHEBI:78533"/>
        <dbReference type="ChEBI" id="CHEBI:456215"/>
        <dbReference type="EC" id="6.1.1.11"/>
    </reaction>
</comment>
<comment type="catalytic activity">
    <reaction evidence="1">
        <text>tRNA(Sec) + L-serine + ATP = L-seryl-tRNA(Sec) + AMP + diphosphate + H(+)</text>
        <dbReference type="Rhea" id="RHEA:42580"/>
        <dbReference type="Rhea" id="RHEA-COMP:9742"/>
        <dbReference type="Rhea" id="RHEA-COMP:10128"/>
        <dbReference type="ChEBI" id="CHEBI:15378"/>
        <dbReference type="ChEBI" id="CHEBI:30616"/>
        <dbReference type="ChEBI" id="CHEBI:33019"/>
        <dbReference type="ChEBI" id="CHEBI:33384"/>
        <dbReference type="ChEBI" id="CHEBI:78442"/>
        <dbReference type="ChEBI" id="CHEBI:78533"/>
        <dbReference type="ChEBI" id="CHEBI:456215"/>
        <dbReference type="EC" id="6.1.1.11"/>
    </reaction>
</comment>
<comment type="pathway">
    <text evidence="1">Aminoacyl-tRNA biosynthesis; selenocysteinyl-tRNA(Sec) biosynthesis; L-seryl-tRNA(Sec) from L-serine and tRNA(Sec): step 1/1.</text>
</comment>
<comment type="subunit">
    <text evidence="1">Homodimer. The tRNA molecule binds across the dimer.</text>
</comment>
<comment type="subcellular location">
    <subcellularLocation>
        <location evidence="1">Cytoplasm</location>
    </subcellularLocation>
</comment>
<comment type="domain">
    <text evidence="1">Consists of two distinct domains, a catalytic core and a N-terminal extension that is involved in tRNA binding.</text>
</comment>
<comment type="similarity">
    <text evidence="1">Belongs to the class-II aminoacyl-tRNA synthetase family. Type-1 seryl-tRNA synthetase subfamily.</text>
</comment>
<feature type="chain" id="PRO_1000077199" description="Serine--tRNA ligase">
    <location>
        <begin position="1"/>
        <end position="424"/>
    </location>
</feature>
<feature type="binding site" evidence="1">
    <location>
        <begin position="229"/>
        <end position="231"/>
    </location>
    <ligand>
        <name>L-serine</name>
        <dbReference type="ChEBI" id="CHEBI:33384"/>
    </ligand>
</feature>
<feature type="binding site" evidence="1">
    <location>
        <begin position="260"/>
        <end position="262"/>
    </location>
    <ligand>
        <name>ATP</name>
        <dbReference type="ChEBI" id="CHEBI:30616"/>
    </ligand>
</feature>
<feature type="binding site" evidence="1">
    <location>
        <position position="283"/>
    </location>
    <ligand>
        <name>L-serine</name>
        <dbReference type="ChEBI" id="CHEBI:33384"/>
    </ligand>
</feature>
<feature type="binding site" evidence="1">
    <location>
        <begin position="347"/>
        <end position="350"/>
    </location>
    <ligand>
        <name>ATP</name>
        <dbReference type="ChEBI" id="CHEBI:30616"/>
    </ligand>
</feature>
<feature type="binding site" evidence="1">
    <location>
        <position position="383"/>
    </location>
    <ligand>
        <name>L-serine</name>
        <dbReference type="ChEBI" id="CHEBI:33384"/>
    </ligand>
</feature>
<keyword id="KW-0030">Aminoacyl-tRNA synthetase</keyword>
<keyword id="KW-0067">ATP-binding</keyword>
<keyword id="KW-0963">Cytoplasm</keyword>
<keyword id="KW-0436">Ligase</keyword>
<keyword id="KW-0547">Nucleotide-binding</keyword>
<keyword id="KW-0648">Protein biosynthesis</keyword>
<keyword id="KW-1185">Reference proteome</keyword>
<reference key="1">
    <citation type="journal article" date="2009" name="BMC Genomics">
        <title>Complete genome sequence of the sugarcane nitrogen-fixing endophyte Gluconacetobacter diazotrophicus Pal5.</title>
        <authorList>
            <person name="Bertalan M."/>
            <person name="Albano R."/>
            <person name="de Padua V."/>
            <person name="Rouws L."/>
            <person name="Rojas C."/>
            <person name="Hemerly A."/>
            <person name="Teixeira K."/>
            <person name="Schwab S."/>
            <person name="Araujo J."/>
            <person name="Oliveira A."/>
            <person name="Franca L."/>
            <person name="Magalhaes V."/>
            <person name="Alqueres S."/>
            <person name="Cardoso A."/>
            <person name="Almeida W."/>
            <person name="Loureiro M.M."/>
            <person name="Nogueira E."/>
            <person name="Cidade D."/>
            <person name="Oliveira D."/>
            <person name="Simao T."/>
            <person name="Macedo J."/>
            <person name="Valadao A."/>
            <person name="Dreschsel M."/>
            <person name="Freitas F."/>
            <person name="Vidal M."/>
            <person name="Guedes H."/>
            <person name="Rodrigues E."/>
            <person name="Meneses C."/>
            <person name="Brioso P."/>
            <person name="Pozzer L."/>
            <person name="Figueiredo D."/>
            <person name="Montano H."/>
            <person name="Junior J."/>
            <person name="de Souza Filho G."/>
            <person name="Martin Quintana Flores V."/>
            <person name="Ferreira B."/>
            <person name="Branco A."/>
            <person name="Gonzalez P."/>
            <person name="Guillobel H."/>
            <person name="Lemos M."/>
            <person name="Seibel L."/>
            <person name="Macedo J."/>
            <person name="Alves-Ferreira M."/>
            <person name="Sachetto-Martins G."/>
            <person name="Coelho A."/>
            <person name="Santos E."/>
            <person name="Amaral G."/>
            <person name="Neves A."/>
            <person name="Pacheco A.B."/>
            <person name="Carvalho D."/>
            <person name="Lery L."/>
            <person name="Bisch P."/>
            <person name="Rossle S.C."/>
            <person name="Urmenyi T."/>
            <person name="Rael Pereira A."/>
            <person name="Silva R."/>
            <person name="Rondinelli E."/>
            <person name="von Kruger W."/>
            <person name="Martins O."/>
            <person name="Baldani J.I."/>
            <person name="Ferreira P.C."/>
        </authorList>
    </citation>
    <scope>NUCLEOTIDE SEQUENCE [LARGE SCALE GENOMIC DNA]</scope>
    <source>
        <strain>ATCC 49037 / DSM 5601 / CCUG 37298 / CIP 103539 / LMG 7603 / PAl5</strain>
    </source>
</reference>
<reference key="2">
    <citation type="journal article" date="2010" name="Stand. Genomic Sci.">
        <title>Two genome sequences of the same bacterial strain, Gluconacetobacter diazotrophicus PAl 5, suggest a new standard in genome sequence submission.</title>
        <authorList>
            <person name="Giongo A."/>
            <person name="Tyler H.L."/>
            <person name="Zipperer U.N."/>
            <person name="Triplett E.W."/>
        </authorList>
    </citation>
    <scope>NUCLEOTIDE SEQUENCE [LARGE SCALE GENOMIC DNA]</scope>
    <source>
        <strain>ATCC 49037 / DSM 5601 / CCUG 37298 / CIP 103539 / LMG 7603 / PAl5</strain>
    </source>
</reference>
<proteinExistence type="inferred from homology"/>
<protein>
    <recommendedName>
        <fullName evidence="1">Serine--tRNA ligase</fullName>
        <ecNumber evidence="1">6.1.1.11</ecNumber>
    </recommendedName>
    <alternativeName>
        <fullName evidence="1">Seryl-tRNA synthetase</fullName>
        <shortName evidence="1">SerRS</shortName>
    </alternativeName>
    <alternativeName>
        <fullName evidence="1">Seryl-tRNA(Ser/Sec) synthetase</fullName>
    </alternativeName>
</protein>
<organism>
    <name type="scientific">Gluconacetobacter diazotrophicus (strain ATCC 49037 / DSM 5601 / CCUG 37298 / CIP 103539 / LMG 7603 / PAl5)</name>
    <dbReference type="NCBI Taxonomy" id="272568"/>
    <lineage>
        <taxon>Bacteria</taxon>
        <taxon>Pseudomonadati</taxon>
        <taxon>Pseudomonadota</taxon>
        <taxon>Alphaproteobacteria</taxon>
        <taxon>Acetobacterales</taxon>
        <taxon>Acetobacteraceae</taxon>
        <taxon>Gluconacetobacter</taxon>
    </lineage>
</organism>
<evidence type="ECO:0000255" key="1">
    <source>
        <dbReference type="HAMAP-Rule" id="MF_00176"/>
    </source>
</evidence>
<dbReference type="EC" id="6.1.1.11" evidence="1"/>
<dbReference type="EMBL" id="AM889285">
    <property type="protein sequence ID" value="CAP56162.1"/>
    <property type="molecule type" value="Genomic_DNA"/>
</dbReference>
<dbReference type="EMBL" id="CP001189">
    <property type="protein sequence ID" value="ACI50233.1"/>
    <property type="molecule type" value="Genomic_DNA"/>
</dbReference>
<dbReference type="RefSeq" id="WP_012226067.1">
    <property type="nucleotide sequence ID" value="NC_010125.1"/>
</dbReference>
<dbReference type="SMR" id="A9HLG2"/>
<dbReference type="STRING" id="272568.GDI2219"/>
<dbReference type="KEGG" id="gdi:GDI2219"/>
<dbReference type="KEGG" id="gdj:Gdia_0437"/>
<dbReference type="eggNOG" id="COG0172">
    <property type="taxonomic scope" value="Bacteria"/>
</dbReference>
<dbReference type="HOGENOM" id="CLU_023797_1_1_5"/>
<dbReference type="OrthoDB" id="9804647at2"/>
<dbReference type="UniPathway" id="UPA00906">
    <property type="reaction ID" value="UER00895"/>
</dbReference>
<dbReference type="Proteomes" id="UP000001176">
    <property type="component" value="Chromosome"/>
</dbReference>
<dbReference type="GO" id="GO:0005737">
    <property type="term" value="C:cytoplasm"/>
    <property type="evidence" value="ECO:0007669"/>
    <property type="project" value="UniProtKB-SubCell"/>
</dbReference>
<dbReference type="GO" id="GO:0005524">
    <property type="term" value="F:ATP binding"/>
    <property type="evidence" value="ECO:0007669"/>
    <property type="project" value="UniProtKB-UniRule"/>
</dbReference>
<dbReference type="GO" id="GO:0004828">
    <property type="term" value="F:serine-tRNA ligase activity"/>
    <property type="evidence" value="ECO:0007669"/>
    <property type="project" value="UniProtKB-UniRule"/>
</dbReference>
<dbReference type="GO" id="GO:0016260">
    <property type="term" value="P:selenocysteine biosynthetic process"/>
    <property type="evidence" value="ECO:0007669"/>
    <property type="project" value="UniProtKB-UniRule"/>
</dbReference>
<dbReference type="GO" id="GO:0006434">
    <property type="term" value="P:seryl-tRNA aminoacylation"/>
    <property type="evidence" value="ECO:0007669"/>
    <property type="project" value="UniProtKB-UniRule"/>
</dbReference>
<dbReference type="CDD" id="cd00770">
    <property type="entry name" value="SerRS_core"/>
    <property type="match status" value="1"/>
</dbReference>
<dbReference type="Gene3D" id="3.30.930.10">
    <property type="entry name" value="Bira Bifunctional Protein, Domain 2"/>
    <property type="match status" value="1"/>
</dbReference>
<dbReference type="Gene3D" id="1.10.287.40">
    <property type="entry name" value="Serine-tRNA synthetase, tRNA binding domain"/>
    <property type="match status" value="1"/>
</dbReference>
<dbReference type="HAMAP" id="MF_00176">
    <property type="entry name" value="Ser_tRNA_synth_type1"/>
    <property type="match status" value="1"/>
</dbReference>
<dbReference type="InterPro" id="IPR002314">
    <property type="entry name" value="aa-tRNA-synt_IIb"/>
</dbReference>
<dbReference type="InterPro" id="IPR006195">
    <property type="entry name" value="aa-tRNA-synth_II"/>
</dbReference>
<dbReference type="InterPro" id="IPR045864">
    <property type="entry name" value="aa-tRNA-synth_II/BPL/LPL"/>
</dbReference>
<dbReference type="InterPro" id="IPR002317">
    <property type="entry name" value="Ser-tRNA-ligase_type_1"/>
</dbReference>
<dbReference type="InterPro" id="IPR015866">
    <property type="entry name" value="Ser-tRNA-synth_1_N"/>
</dbReference>
<dbReference type="InterPro" id="IPR042103">
    <property type="entry name" value="SerRS_1_N_sf"/>
</dbReference>
<dbReference type="InterPro" id="IPR033729">
    <property type="entry name" value="SerRS_core"/>
</dbReference>
<dbReference type="InterPro" id="IPR010978">
    <property type="entry name" value="tRNA-bd_arm"/>
</dbReference>
<dbReference type="NCBIfam" id="TIGR00414">
    <property type="entry name" value="serS"/>
    <property type="match status" value="1"/>
</dbReference>
<dbReference type="PANTHER" id="PTHR43697:SF1">
    <property type="entry name" value="SERINE--TRNA LIGASE"/>
    <property type="match status" value="1"/>
</dbReference>
<dbReference type="PANTHER" id="PTHR43697">
    <property type="entry name" value="SERYL-TRNA SYNTHETASE"/>
    <property type="match status" value="1"/>
</dbReference>
<dbReference type="Pfam" id="PF02403">
    <property type="entry name" value="Seryl_tRNA_N"/>
    <property type="match status" value="1"/>
</dbReference>
<dbReference type="Pfam" id="PF00587">
    <property type="entry name" value="tRNA-synt_2b"/>
    <property type="match status" value="1"/>
</dbReference>
<dbReference type="PIRSF" id="PIRSF001529">
    <property type="entry name" value="Ser-tRNA-synth_IIa"/>
    <property type="match status" value="1"/>
</dbReference>
<dbReference type="PRINTS" id="PR00981">
    <property type="entry name" value="TRNASYNTHSER"/>
</dbReference>
<dbReference type="SUPFAM" id="SSF55681">
    <property type="entry name" value="Class II aaRS and biotin synthetases"/>
    <property type="match status" value="1"/>
</dbReference>
<dbReference type="SUPFAM" id="SSF46589">
    <property type="entry name" value="tRNA-binding arm"/>
    <property type="match status" value="1"/>
</dbReference>
<dbReference type="PROSITE" id="PS50862">
    <property type="entry name" value="AA_TRNA_LIGASE_II"/>
    <property type="match status" value="1"/>
</dbReference>
<sequence>MHDLRALRADPAAFDAALARRGEAPAAIHIASLDEDRRAAVTALQDKQARRKSLSKEVGALRRTGEDSTALEAEAVQLREDIEKLEVLVRELDAEIRDCLVVLPNRLDDGVPEGADESANVVVHQVGERRDFAFPPREHFALGEALGLMDFETAGKLSGARFVVLRGALARMERALGQFMLDLHVQEHGYTETAVPVLVNEAAMFGTDKLPKFADQSFRTEDGRWLIPTAEVPLTASVAGDILPASALPRRMVALSSCFRSEAGAAGRDTRGMLRQHQFQKVEMVSITAPGDSDAEHERMTRCAEKVLERLGIPYRRMLLCAGDTGFGAARTFDLEAWLPGQDAWREISSCSTTRDFQARRMNARYRPADGAGPEFVHTLNGSGLAVGRTLIAVMENYQNADGSITVPQALRPYMNGLAAISAR</sequence>
<name>SYS_GLUDA</name>